<accession>P37755</accession>
<accession>P82275</accession>
<proteinExistence type="inferred from homology"/>
<feature type="chain" id="PRO_0000147824" description="Phosphomannomutase">
    <location>
        <begin position="1"/>
        <end position="456"/>
    </location>
</feature>
<feature type="active site" description="Phosphoserine intermediate" evidence="1">
    <location>
        <position position="98"/>
    </location>
</feature>
<feature type="binding site" description="via phosphate group" evidence="1">
    <location>
        <position position="98"/>
    </location>
    <ligand>
        <name>Mg(2+)</name>
        <dbReference type="ChEBI" id="CHEBI:18420"/>
    </ligand>
</feature>
<feature type="binding site" evidence="1">
    <location>
        <position position="246"/>
    </location>
    <ligand>
        <name>Mg(2+)</name>
        <dbReference type="ChEBI" id="CHEBI:18420"/>
    </ligand>
</feature>
<feature type="binding site" evidence="1">
    <location>
        <position position="248"/>
    </location>
    <ligand>
        <name>Mg(2+)</name>
        <dbReference type="ChEBI" id="CHEBI:18420"/>
    </ligand>
</feature>
<feature type="binding site" evidence="1">
    <location>
        <position position="250"/>
    </location>
    <ligand>
        <name>Mg(2+)</name>
        <dbReference type="ChEBI" id="CHEBI:18420"/>
    </ligand>
</feature>
<feature type="sequence variant">
    <original>A</original>
    <variation>R</variation>
    <location>
        <position position="392"/>
    </location>
</feature>
<feature type="sequence variant">
    <original>T</original>
    <variation>V</variation>
    <location>
        <position position="441"/>
    </location>
</feature>
<feature type="sequence variant">
    <original>A</original>
    <variation>E</variation>
    <location>
        <position position="446"/>
    </location>
</feature>
<feature type="sequence variant">
    <original>EEILA</original>
    <variation>TELLN</variation>
    <location>
        <begin position="449"/>
        <end position="453"/>
    </location>
</feature>
<feature type="sequence variant">
    <original>K</original>
    <variation>KEELL</variation>
    <location>
        <position position="456"/>
    </location>
</feature>
<sequence length="456" mass="50423">MTQLTCFKAYDIRGELGEELNEDIAYRIGRAYGEFLKPGKIVVGGDVRLTSESLKLALARGLMDAGTDVLDIGLSGTEEIYFATFHLGVDGGIEVTASHNPMNYNGMKLVRENAKPISGDTGLRDIQRLAEENQFPPVDPARRGTLRQISVLKEYVDHLMGYVDLANFTRPLKLVVNSGNGAAGHVIDEVEKRFAAAGVPVTFIKVHHQPDGHFPNGIPNPLLPECRQDTADAVREHQADMGIAFDGDFDRCFLFDDEASFIEGYYIVGLLAEAFLQKQPGAKIIHDPRLTWNTVDIVTRNGGQPVMSKTGHAFIKERMRQEDAIYGGEMSAHHYFRDFAYCDSGMIPWLLVAELLCLKNSSLKSLVADRQAAFPASGEINRKLGNAAEAIARIRAQYEPAAAHIDTTDGISIEYPEWRFNLRTSNTEPVVRLNVESRADTALMNAKTEEILALLK</sequence>
<gene>
    <name type="primary">manB</name>
    <name type="synonym">rfbK</name>
    <name type="synonym">rfbK2</name>
</gene>
<keyword id="KW-0413">Isomerase</keyword>
<keyword id="KW-0448">Lipopolysaccharide biosynthesis</keyword>
<keyword id="KW-0460">Magnesium</keyword>
<keyword id="KW-0479">Metal-binding</keyword>
<keyword id="KW-0597">Phosphoprotein</keyword>
<protein>
    <recommendedName>
        <fullName>Phosphomannomutase</fullName>
        <shortName>PMM</shortName>
        <ecNumber>5.4.2.8</ecNumber>
    </recommendedName>
</protein>
<evidence type="ECO:0000250" key="1"/>
<evidence type="ECO:0000305" key="2"/>
<name>RFBK9_ECOLX</name>
<reference key="1">
    <citation type="journal article" date="1994" name="J. Bacteriol.">
        <title>Cloning and analysis of duplicated rfbM and rfbK genes involved in the formation of GDP-mannose in Escherichia coli O9:K30 and participation of rfb genes in the synthesis of the group I K30 capsular polysaccharide.</title>
        <authorList>
            <person name="Jayaratne P."/>
            <person name="Bronner D."/>
            <person name="Maclachlan R.P."/>
            <person name="Dodgson C."/>
            <person name="Kido N."/>
            <person name="Whitfield C."/>
        </authorList>
    </citation>
    <scope>NUCLEOTIDE SEQUENCE [GENOMIC DNA]</scope>
    <source>
        <strain>O9a:K30:H12 / E69</strain>
    </source>
</reference>
<reference key="2">
    <citation type="journal article" date="1996" name="Trends Microbiol.">
        <title>Bacterial polysaccharide synthesis and gene nomenclature.</title>
        <authorList>
            <person name="Reeves P.R."/>
            <person name="Hobbs M."/>
            <person name="Valvano M.A."/>
            <person name="Skurnik M."/>
            <person name="Whitfield C."/>
            <person name="Coplin D."/>
            <person name="Kido N."/>
            <person name="Klena J."/>
            <person name="Maskell D."/>
            <person name="Raetz C.R.H."/>
            <person name="Rick P.D."/>
        </authorList>
    </citation>
    <scope>GENE NAME</scope>
</reference>
<dbReference type="EC" id="5.4.2.8"/>
<dbReference type="EMBL" id="L27646">
    <property type="protein sequence ID" value="AAA21138.1"/>
    <property type="molecule type" value="Genomic_DNA"/>
</dbReference>
<dbReference type="EMBL" id="L27632">
    <property type="protein sequence ID" value="AAA21140.1"/>
    <property type="molecule type" value="Genomic_DNA"/>
</dbReference>
<dbReference type="RefSeq" id="WP_032248255.1">
    <property type="nucleotide sequence ID" value="NZ_VKJG01000247.1"/>
</dbReference>
<dbReference type="SMR" id="P37755"/>
<dbReference type="STRING" id="585034.ECIAI1_2103"/>
<dbReference type="UniPathway" id="UPA00126">
    <property type="reaction ID" value="UER00424"/>
</dbReference>
<dbReference type="UniPathway" id="UPA00281"/>
<dbReference type="GO" id="GO:0000287">
    <property type="term" value="F:magnesium ion binding"/>
    <property type="evidence" value="ECO:0007669"/>
    <property type="project" value="InterPro"/>
</dbReference>
<dbReference type="GO" id="GO:0004615">
    <property type="term" value="F:phosphomannomutase activity"/>
    <property type="evidence" value="ECO:0007669"/>
    <property type="project" value="UniProtKB-EC"/>
</dbReference>
<dbReference type="GO" id="GO:0009298">
    <property type="term" value="P:GDP-mannose biosynthetic process"/>
    <property type="evidence" value="ECO:0007669"/>
    <property type="project" value="UniProtKB-UniPathway"/>
</dbReference>
<dbReference type="GO" id="GO:0009243">
    <property type="term" value="P:O antigen biosynthetic process"/>
    <property type="evidence" value="ECO:0007669"/>
    <property type="project" value="UniProtKB-UniPathway"/>
</dbReference>
<dbReference type="CDD" id="cd03089">
    <property type="entry name" value="PMM_PGM"/>
    <property type="match status" value="1"/>
</dbReference>
<dbReference type="Gene3D" id="3.40.120.10">
    <property type="entry name" value="Alpha-D-Glucose-1,6-Bisphosphate, subunit A, domain 3"/>
    <property type="match status" value="3"/>
</dbReference>
<dbReference type="Gene3D" id="3.30.310.50">
    <property type="entry name" value="Alpha-D-phosphohexomutase, C-terminal domain"/>
    <property type="match status" value="1"/>
</dbReference>
<dbReference type="InterPro" id="IPR005844">
    <property type="entry name" value="A-D-PHexomutase_a/b/a-I"/>
</dbReference>
<dbReference type="InterPro" id="IPR016055">
    <property type="entry name" value="A-D-PHexomutase_a/b/a-I/II/III"/>
</dbReference>
<dbReference type="InterPro" id="IPR005845">
    <property type="entry name" value="A-D-PHexomutase_a/b/a-II"/>
</dbReference>
<dbReference type="InterPro" id="IPR005846">
    <property type="entry name" value="A-D-PHexomutase_a/b/a-III"/>
</dbReference>
<dbReference type="InterPro" id="IPR005843">
    <property type="entry name" value="A-D-PHexomutase_C"/>
</dbReference>
<dbReference type="InterPro" id="IPR036900">
    <property type="entry name" value="A-D-PHexomutase_C_sf"/>
</dbReference>
<dbReference type="InterPro" id="IPR016066">
    <property type="entry name" value="A-D-PHexomutase_CS"/>
</dbReference>
<dbReference type="InterPro" id="IPR005841">
    <property type="entry name" value="Alpha-D-phosphohexomutase_SF"/>
</dbReference>
<dbReference type="NCBIfam" id="NF011943">
    <property type="entry name" value="PRK15414.1"/>
    <property type="match status" value="1"/>
</dbReference>
<dbReference type="PANTHER" id="PTHR43771">
    <property type="entry name" value="PHOSPHOMANNOMUTASE"/>
    <property type="match status" value="1"/>
</dbReference>
<dbReference type="PANTHER" id="PTHR43771:SF1">
    <property type="entry name" value="PHOSPHOMANNOMUTASE"/>
    <property type="match status" value="1"/>
</dbReference>
<dbReference type="Pfam" id="PF02878">
    <property type="entry name" value="PGM_PMM_I"/>
    <property type="match status" value="1"/>
</dbReference>
<dbReference type="Pfam" id="PF02879">
    <property type="entry name" value="PGM_PMM_II"/>
    <property type="match status" value="1"/>
</dbReference>
<dbReference type="Pfam" id="PF02880">
    <property type="entry name" value="PGM_PMM_III"/>
    <property type="match status" value="1"/>
</dbReference>
<dbReference type="Pfam" id="PF00408">
    <property type="entry name" value="PGM_PMM_IV"/>
    <property type="match status" value="1"/>
</dbReference>
<dbReference type="PRINTS" id="PR00509">
    <property type="entry name" value="PGMPMM"/>
</dbReference>
<dbReference type="SUPFAM" id="SSF55957">
    <property type="entry name" value="Phosphoglucomutase, C-terminal domain"/>
    <property type="match status" value="1"/>
</dbReference>
<dbReference type="SUPFAM" id="SSF53738">
    <property type="entry name" value="Phosphoglucomutase, first 3 domains"/>
    <property type="match status" value="3"/>
</dbReference>
<dbReference type="PROSITE" id="PS00710">
    <property type="entry name" value="PGM_PMM"/>
    <property type="match status" value="1"/>
</dbReference>
<comment type="function">
    <text>Involved in GDP-mannose biosynthesis which serves as the activated sugar nucleotide precursor for mannose residues in cell surface polysaccharides. This enzyme participates in synthesis of the LPS O9 antigen.</text>
</comment>
<comment type="catalytic activity">
    <reaction>
        <text>alpha-D-mannose 1-phosphate = D-mannose 6-phosphate</text>
        <dbReference type="Rhea" id="RHEA:11140"/>
        <dbReference type="ChEBI" id="CHEBI:58409"/>
        <dbReference type="ChEBI" id="CHEBI:58735"/>
        <dbReference type="EC" id="5.4.2.8"/>
    </reaction>
</comment>
<comment type="cofactor">
    <cofactor evidence="1">
        <name>Mg(2+)</name>
        <dbReference type="ChEBI" id="CHEBI:18420"/>
    </cofactor>
    <text evidence="1">Binds 1 Mg(2+) ion per subunit.</text>
</comment>
<comment type="pathway">
    <text>Nucleotide-sugar biosynthesis; GDP-alpha-D-mannose biosynthesis; alpha-D-mannose 1-phosphate from D-fructose 6-phosphate: step 2/2.</text>
</comment>
<comment type="pathway">
    <text>Bacterial outer membrane biogenesis; LPS O-antigen biosynthesis.</text>
</comment>
<comment type="miscellaneous">
    <text>There are two duplicated genes for manB and manC in this E.coli strain.</text>
</comment>
<comment type="similarity">
    <text evidence="2">Belongs to the phosphohexose mutase family.</text>
</comment>
<organism>
    <name type="scientific">Escherichia coli</name>
    <dbReference type="NCBI Taxonomy" id="562"/>
    <lineage>
        <taxon>Bacteria</taxon>
        <taxon>Pseudomonadati</taxon>
        <taxon>Pseudomonadota</taxon>
        <taxon>Gammaproteobacteria</taxon>
        <taxon>Enterobacterales</taxon>
        <taxon>Enterobacteriaceae</taxon>
        <taxon>Escherichia</taxon>
    </lineage>
</organism>